<sequence>MKLTTEQKVAIREILKTKLSMGVSNVVFEKSDGTIRTMKGTRDADFMPTMQTGKLTESTRKESTDMIPVFDVELGAWRGFSIDKLISVNGMKVEHLLQFIGK</sequence>
<accession>P17308</accession>
<gene>
    <name type="primary">y13B</name>
    <name type="synonym">31.1</name>
</gene>
<protein>
    <recommendedName>
        <fullName>Uncharacterized 11.5 kDa protein in Gp31-cd intergenic region</fullName>
    </recommendedName>
    <alternativeName>
        <fullName>ORF B</fullName>
    </alternativeName>
</protein>
<dbReference type="EMBL" id="X17657">
    <property type="protein sequence ID" value="CAA35650.1"/>
    <property type="molecule type" value="Genomic_DNA"/>
</dbReference>
<dbReference type="EMBL" id="M37882">
    <property type="protein sequence ID" value="AAA32505.1"/>
    <property type="molecule type" value="Genomic_DNA"/>
</dbReference>
<dbReference type="EMBL" id="X54536">
    <property type="protein sequence ID" value="CAA38404.1"/>
    <property type="molecule type" value="Genomic_DNA"/>
</dbReference>
<dbReference type="EMBL" id="AF158101">
    <property type="protein sequence ID" value="AAD42452.1"/>
    <property type="molecule type" value="Genomic_DNA"/>
</dbReference>
<dbReference type="PIR" id="S12714">
    <property type="entry name" value="S12714"/>
</dbReference>
<dbReference type="RefSeq" id="NP_049826.1">
    <property type="nucleotide sequence ID" value="NC_000866.4"/>
</dbReference>
<dbReference type="GeneID" id="1258664"/>
<dbReference type="KEGG" id="vg:1258664"/>
<dbReference type="OrthoDB" id="18033at10239"/>
<dbReference type="Proteomes" id="UP000009087">
    <property type="component" value="Segment"/>
</dbReference>
<dbReference type="InterPro" id="IPR024401">
    <property type="entry name" value="WYL_prot"/>
</dbReference>
<dbReference type="Pfam" id="PF10902">
    <property type="entry name" value="WYL_2"/>
    <property type="match status" value="1"/>
</dbReference>
<feature type="chain" id="PRO_0000165175" description="Uncharacterized 11.5 kDa protein in Gp31-cd intergenic region">
    <location>
        <begin position="1"/>
        <end position="102"/>
    </location>
</feature>
<organism>
    <name type="scientific">Enterobacteria phage T4</name>
    <name type="common">Bacteriophage T4</name>
    <dbReference type="NCBI Taxonomy" id="10665"/>
    <lineage>
        <taxon>Viruses</taxon>
        <taxon>Duplodnaviria</taxon>
        <taxon>Heunggongvirae</taxon>
        <taxon>Uroviricota</taxon>
        <taxon>Caudoviricetes</taxon>
        <taxon>Straboviridae</taxon>
        <taxon>Tevenvirinae</taxon>
        <taxon>Tequatrovirus</taxon>
    </lineage>
</organism>
<proteinExistence type="predicted"/>
<name>Y13B_BPT4</name>
<organismHost>
    <name type="scientific">Escherichia coli</name>
    <dbReference type="NCBI Taxonomy" id="562"/>
</organismHost>
<reference key="1">
    <citation type="journal article" date="1990" name="Nucleic Acids Res.">
        <title>Cloning and sequencing of bacteriophage T4 genes between map positions 128.3-130.3.</title>
        <authorList>
            <person name="Prilipov A.G."/>
            <person name="Mesyanzhinov V.V."/>
            <person name="Aebi U."/>
            <person name="Kellenberger E."/>
        </authorList>
    </citation>
    <scope>NUCLEOTIDE SEQUENCE [GENOMIC DNA]</scope>
    <source>
        <strain>D</strain>
    </source>
</reference>
<reference key="2">
    <citation type="journal article" date="1990" name="Nucleic Acids Res.">
        <title>Nucleotide sequence of bacteriophage T4 gene 31 region.</title>
        <authorList>
            <person name="Raudonikiene A."/>
            <person name="Nivinskas R."/>
        </authorList>
    </citation>
    <scope>NUCLEOTIDE SEQUENCE [GENOMIC DNA]</scope>
</reference>
<reference key="3">
    <citation type="journal article" date="1992" name="Gene">
        <title>Gene rIII is the nearest downstream neighbour of bacteriophage T4 gene 31.</title>
        <authorList>
            <person name="Raudonikiene A."/>
            <person name="Nivinskas R."/>
        </authorList>
    </citation>
    <scope>NUCLEOTIDE SEQUENCE [GENOMIC DNA]</scope>
</reference>
<reference key="4">
    <citation type="journal article" date="1990" name="Gene">
        <title>Mutational analysis of the phage T4 morphogenetic 31 gene, whose product interacts with the Escherichia coli GroEL protein.</title>
        <authorList>
            <person name="Keppel F."/>
            <person name="Lipinska B."/>
            <person name="Ang D."/>
            <person name="Georgopoulos C."/>
        </authorList>
    </citation>
    <scope>NUCLEOTIDE SEQUENCE [GENOMIC DNA]</scope>
</reference>
<reference key="5">
    <citation type="journal article" date="2003" name="Microbiol. Mol. Biol. Rev.">
        <title>Bacteriophage T4 genome.</title>
        <authorList>
            <person name="Miller E.S."/>
            <person name="Kutter E."/>
            <person name="Mosig G."/>
            <person name="Arisaka F."/>
            <person name="Kunisawa T."/>
            <person name="Ruger W."/>
        </authorList>
    </citation>
    <scope>NUCLEOTIDE SEQUENCE [LARGE SCALE GENOMIC DNA]</scope>
</reference>
<keyword id="KW-1185">Reference proteome</keyword>